<reference key="1">
    <citation type="submission" date="2007-09" db="EMBL/GenBank/DDBJ databases">
        <title>Complete genome sequence of Rickettsia canadensis.</title>
        <authorList>
            <person name="Madan A."/>
            <person name="Fahey J."/>
            <person name="Helton E."/>
            <person name="Ketteman M."/>
            <person name="Madan A."/>
            <person name="Rodrigues S."/>
            <person name="Sanchez A."/>
            <person name="Whiting M."/>
            <person name="Dasch G."/>
            <person name="Eremeeva M."/>
        </authorList>
    </citation>
    <scope>NUCLEOTIDE SEQUENCE [LARGE SCALE GENOMIC DNA]</scope>
    <source>
        <strain>McKiel</strain>
    </source>
</reference>
<name>RS16_RICCK</name>
<accession>A8F0A2</accession>
<comment type="similarity">
    <text evidence="1">Belongs to the bacterial ribosomal protein bS16 family.</text>
</comment>
<dbReference type="EMBL" id="CP000409">
    <property type="protein sequence ID" value="ABV74035.1"/>
    <property type="molecule type" value="Genomic_DNA"/>
</dbReference>
<dbReference type="RefSeq" id="WP_012149230.1">
    <property type="nucleotide sequence ID" value="NC_009879.1"/>
</dbReference>
<dbReference type="SMR" id="A8F0A2"/>
<dbReference type="STRING" id="293613.A1E_05620"/>
<dbReference type="KEGG" id="rcm:A1E_05620"/>
<dbReference type="eggNOG" id="COG0228">
    <property type="taxonomic scope" value="Bacteria"/>
</dbReference>
<dbReference type="HOGENOM" id="CLU_100590_3_1_5"/>
<dbReference type="Proteomes" id="UP000007056">
    <property type="component" value="Chromosome"/>
</dbReference>
<dbReference type="GO" id="GO:0005737">
    <property type="term" value="C:cytoplasm"/>
    <property type="evidence" value="ECO:0007669"/>
    <property type="project" value="UniProtKB-ARBA"/>
</dbReference>
<dbReference type="GO" id="GO:0015935">
    <property type="term" value="C:small ribosomal subunit"/>
    <property type="evidence" value="ECO:0007669"/>
    <property type="project" value="TreeGrafter"/>
</dbReference>
<dbReference type="GO" id="GO:0003735">
    <property type="term" value="F:structural constituent of ribosome"/>
    <property type="evidence" value="ECO:0007669"/>
    <property type="project" value="InterPro"/>
</dbReference>
<dbReference type="GO" id="GO:0006412">
    <property type="term" value="P:translation"/>
    <property type="evidence" value="ECO:0007669"/>
    <property type="project" value="UniProtKB-UniRule"/>
</dbReference>
<dbReference type="Gene3D" id="3.30.1320.10">
    <property type="match status" value="1"/>
</dbReference>
<dbReference type="HAMAP" id="MF_00385">
    <property type="entry name" value="Ribosomal_bS16"/>
    <property type="match status" value="1"/>
</dbReference>
<dbReference type="InterPro" id="IPR000307">
    <property type="entry name" value="Ribosomal_bS16"/>
</dbReference>
<dbReference type="InterPro" id="IPR020592">
    <property type="entry name" value="Ribosomal_bS16_CS"/>
</dbReference>
<dbReference type="InterPro" id="IPR023803">
    <property type="entry name" value="Ribosomal_bS16_dom_sf"/>
</dbReference>
<dbReference type="NCBIfam" id="TIGR00002">
    <property type="entry name" value="S16"/>
    <property type="match status" value="1"/>
</dbReference>
<dbReference type="PANTHER" id="PTHR12919">
    <property type="entry name" value="30S RIBOSOMAL PROTEIN S16"/>
    <property type="match status" value="1"/>
</dbReference>
<dbReference type="PANTHER" id="PTHR12919:SF20">
    <property type="entry name" value="SMALL RIBOSOMAL SUBUNIT PROTEIN BS16M"/>
    <property type="match status" value="1"/>
</dbReference>
<dbReference type="Pfam" id="PF00886">
    <property type="entry name" value="Ribosomal_S16"/>
    <property type="match status" value="1"/>
</dbReference>
<dbReference type="SUPFAM" id="SSF54565">
    <property type="entry name" value="Ribosomal protein S16"/>
    <property type="match status" value="1"/>
</dbReference>
<dbReference type="PROSITE" id="PS00732">
    <property type="entry name" value="RIBOSOMAL_S16"/>
    <property type="match status" value="1"/>
</dbReference>
<feature type="chain" id="PRO_1000049335" description="Small ribosomal subunit protein bS16">
    <location>
        <begin position="1"/>
        <end position="111"/>
    </location>
</feature>
<organism>
    <name type="scientific">Rickettsia canadensis (strain McKiel)</name>
    <dbReference type="NCBI Taxonomy" id="293613"/>
    <lineage>
        <taxon>Bacteria</taxon>
        <taxon>Pseudomonadati</taxon>
        <taxon>Pseudomonadota</taxon>
        <taxon>Alphaproteobacteria</taxon>
        <taxon>Rickettsiales</taxon>
        <taxon>Rickettsiaceae</taxon>
        <taxon>Rickettsieae</taxon>
        <taxon>Rickettsia</taxon>
        <taxon>belli group</taxon>
    </lineage>
</organism>
<keyword id="KW-0687">Ribonucleoprotein</keyword>
<keyword id="KW-0689">Ribosomal protein</keyword>
<proteinExistence type="inferred from homology"/>
<sequence length="111" mass="12469">MAVKIRLARGGAKKRPFYRVVVANATAPRDGDFLEKVGTYNPMLASDNSERVVLKKDRIEYWLSTGAKPTERVAKFIEQAGVILPEKVKKEMAVKAKNRKPRPSKKEAKEA</sequence>
<evidence type="ECO:0000255" key="1">
    <source>
        <dbReference type="HAMAP-Rule" id="MF_00385"/>
    </source>
</evidence>
<evidence type="ECO:0000305" key="2"/>
<protein>
    <recommendedName>
        <fullName evidence="1">Small ribosomal subunit protein bS16</fullName>
    </recommendedName>
    <alternativeName>
        <fullName evidence="2">30S ribosomal protein S16</fullName>
    </alternativeName>
</protein>
<gene>
    <name evidence="1" type="primary">rpsP</name>
    <name type="ordered locus">A1E_05620</name>
</gene>